<feature type="chain" id="PRO_0000052227" description="Cytochrome P450 BJ-3">
    <location>
        <begin position="1"/>
        <end position="429"/>
    </location>
</feature>
<feature type="binding site" description="axial binding residue" evidence="1">
    <location>
        <position position="376"/>
    </location>
    <ligand>
        <name>heme</name>
        <dbReference type="ChEBI" id="CHEBI:30413"/>
    </ligand>
    <ligandPart>
        <name>Fe</name>
        <dbReference type="ChEBI" id="CHEBI:18248"/>
    </ligandPart>
</feature>
<proteinExistence type="inferred from homology"/>
<protein>
    <recommendedName>
        <fullName>Cytochrome P450 BJ-3</fullName>
        <ecNumber>1.14.14.-</ecNumber>
    </recommendedName>
    <alternativeName>
        <fullName>Cytochrome P450 114</fullName>
    </alternativeName>
</protein>
<organism>
    <name type="scientific">Bradyrhizobium diazoefficiens (strain JCM 10833 / BCRC 13528 / IAM 13628 / NBRC 14792 / USDA 110)</name>
    <dbReference type="NCBI Taxonomy" id="224911"/>
    <lineage>
        <taxon>Bacteria</taxon>
        <taxon>Pseudomonadati</taxon>
        <taxon>Pseudomonadota</taxon>
        <taxon>Alphaproteobacteria</taxon>
        <taxon>Hyphomicrobiales</taxon>
        <taxon>Nitrobacteraceae</taxon>
        <taxon>Bradyrhizobium</taxon>
    </lineage>
</organism>
<accession>Q59204</accession>
<evidence type="ECO:0000250" key="1"/>
<evidence type="ECO:0000305" key="2"/>
<gene>
    <name type="primary">cyp114</name>
    <name type="ordered locus">blr2145</name>
</gene>
<sequence length="429" mass="46921">MDVQETTAACRDAFAELASPACIHDPYPFMRWLREHDPVHRAASGLFLLSRHADIFWAFKATGDAFRGPAPGELARYFSRAATSPSLNLLASTLAMKDPPTHTRLRRLISRDFTMGQIDNLRPSIARIVAARLDGITPALERGEAVDLHREFALALPMLVFAELFGMPQDDMFELAAGIGTILEGLGPHASDPQLAAADAASARVQAYFGDLIQRKRTDPRRDIVSMLVGAHDDDADTLSDAELISMLWGMLLGGFVTTAASIDHAVLAMLAYPEQRHWLQADAARVRAFVEEVLRCDAPAMFSSIPRIAQRDIELGGVVIPKNADVRVLIASGNRDPDAFADPDRFDPARFYGTSPGMSTDGKIMLSFGHGIHFCLGAQLARVQLAESLPRIQARFPTLAFAGQPTREPSAFLRTFRTLPVRLHAQGS</sequence>
<keyword id="KW-0349">Heme</keyword>
<keyword id="KW-0408">Iron</keyword>
<keyword id="KW-0479">Metal-binding</keyword>
<keyword id="KW-0503">Monooxygenase</keyword>
<keyword id="KW-0560">Oxidoreductase</keyword>
<keyword id="KW-1185">Reference proteome</keyword>
<reference key="1">
    <citation type="journal article" date="1993" name="Appl. Environ. Microbiol.">
        <title>Cloning and mutagenesis of a cytochrome P-450 locus from Bradyrhizobium japonicum that is expressed anaerobically and symbiotically.</title>
        <authorList>
            <person name="Tully R.E."/>
            <person name="Keister D.L."/>
        </authorList>
    </citation>
    <scope>NUCLEOTIDE SEQUENCE [GENOMIC DNA]</scope>
    <source>
        <strain>JCM 10833 / BCRC 13528 / IAM 13628 / NBRC 14792 / USDA 110</strain>
    </source>
</reference>
<reference key="2">
    <citation type="journal article" date="1998" name="Biochim. Biophys. Acta">
        <title>Identification and sequencing of a cytochrome P450 gene cluster from Bradyrhizobium japonicum.</title>
        <authorList>
            <person name="Tully R.E."/>
            <person name="van Berkum P."/>
            <person name="Lovins K.W."/>
            <person name="Keister D.L."/>
        </authorList>
    </citation>
    <scope>NUCLEOTIDE SEQUENCE [GENOMIC DNA]</scope>
    <source>
        <strain>JCM 10833 / BCRC 13528 / IAM 13628 / NBRC 14792 / USDA 110</strain>
    </source>
</reference>
<reference key="3">
    <citation type="journal article" date="2002" name="DNA Res.">
        <title>Complete genomic sequence of nitrogen-fixing symbiotic bacterium Bradyrhizobium japonicum USDA110.</title>
        <authorList>
            <person name="Kaneko T."/>
            <person name="Nakamura Y."/>
            <person name="Sato S."/>
            <person name="Minamisawa K."/>
            <person name="Uchiumi T."/>
            <person name="Sasamoto S."/>
            <person name="Watanabe A."/>
            <person name="Idesawa K."/>
            <person name="Iriguchi M."/>
            <person name="Kawashima K."/>
            <person name="Kohara M."/>
            <person name="Matsumoto M."/>
            <person name="Shimpo S."/>
            <person name="Tsuruoka H."/>
            <person name="Wada T."/>
            <person name="Yamada M."/>
            <person name="Tabata S."/>
        </authorList>
    </citation>
    <scope>NUCLEOTIDE SEQUENCE [LARGE SCALE GENOMIC DNA]</scope>
    <source>
        <strain>JCM 10833 / BCRC 13528 / IAM 13628 / NBRC 14792 / USDA 110</strain>
    </source>
</reference>
<comment type="function">
    <text>Cytochromes P450 are a group of heme-thiolate monooxygenases. They oxidize a variety of structurally unrelated compounds, including steroids, fatty acids, and xenobiotics.</text>
</comment>
<comment type="cofactor">
    <cofactor evidence="1">
        <name>heme</name>
        <dbReference type="ChEBI" id="CHEBI:30413"/>
    </cofactor>
</comment>
<comment type="similarity">
    <text evidence="2">Belongs to the cytochrome P450 family.</text>
</comment>
<comment type="sequence caution" evidence="2">
    <conflict type="erroneous initiation">
        <sequence resource="EMBL-CDS" id="AAC28890"/>
    </conflict>
</comment>
<name>CPXR_BRADU</name>
<dbReference type="EC" id="1.14.14.-"/>
<dbReference type="EMBL" id="U12678">
    <property type="protein sequence ID" value="AAC28890.1"/>
    <property type="status" value="ALT_INIT"/>
    <property type="molecule type" value="Genomic_DNA"/>
</dbReference>
<dbReference type="EMBL" id="BA000040">
    <property type="protein sequence ID" value="BAC47410.1"/>
    <property type="molecule type" value="Genomic_DNA"/>
</dbReference>
<dbReference type="PIR" id="I40209">
    <property type="entry name" value="I40209"/>
</dbReference>
<dbReference type="RefSeq" id="NP_768785.1">
    <property type="nucleotide sequence ID" value="NC_004463.1"/>
</dbReference>
<dbReference type="RefSeq" id="WP_011084939.1">
    <property type="nucleotide sequence ID" value="NC_004463.1"/>
</dbReference>
<dbReference type="SMR" id="Q59204"/>
<dbReference type="STRING" id="224911.AAV28_07565"/>
<dbReference type="EnsemblBacteria" id="BAC47410">
    <property type="protein sequence ID" value="BAC47410"/>
    <property type="gene ID" value="BAC47410"/>
</dbReference>
<dbReference type="GeneID" id="46489197"/>
<dbReference type="KEGG" id="bja:blr2145"/>
<dbReference type="PATRIC" id="fig|224911.44.peg.1660"/>
<dbReference type="eggNOG" id="COG2124">
    <property type="taxonomic scope" value="Bacteria"/>
</dbReference>
<dbReference type="HOGENOM" id="CLU_033716_1_0_5"/>
<dbReference type="InParanoid" id="Q59204"/>
<dbReference type="OrthoDB" id="9801155at2"/>
<dbReference type="PhylomeDB" id="Q59204"/>
<dbReference type="Proteomes" id="UP000002526">
    <property type="component" value="Chromosome"/>
</dbReference>
<dbReference type="GO" id="GO:0020037">
    <property type="term" value="F:heme binding"/>
    <property type="evidence" value="ECO:0000318"/>
    <property type="project" value="GO_Central"/>
</dbReference>
<dbReference type="GO" id="GO:0005506">
    <property type="term" value="F:iron ion binding"/>
    <property type="evidence" value="ECO:0007669"/>
    <property type="project" value="InterPro"/>
</dbReference>
<dbReference type="GO" id="GO:0004497">
    <property type="term" value="F:monooxygenase activity"/>
    <property type="evidence" value="ECO:0000318"/>
    <property type="project" value="GO_Central"/>
</dbReference>
<dbReference type="GO" id="GO:0016705">
    <property type="term" value="F:oxidoreductase activity, acting on paired donors, with incorporation or reduction of molecular oxygen"/>
    <property type="evidence" value="ECO:0007669"/>
    <property type="project" value="InterPro"/>
</dbReference>
<dbReference type="FunFam" id="1.10.630.10:FF:000018">
    <property type="entry name" value="Cytochrome P450 monooxygenase"/>
    <property type="match status" value="1"/>
</dbReference>
<dbReference type="Gene3D" id="1.10.630.10">
    <property type="entry name" value="Cytochrome P450"/>
    <property type="match status" value="1"/>
</dbReference>
<dbReference type="InterPro" id="IPR001128">
    <property type="entry name" value="Cyt_P450"/>
</dbReference>
<dbReference type="InterPro" id="IPR002397">
    <property type="entry name" value="Cyt_P450_B"/>
</dbReference>
<dbReference type="InterPro" id="IPR017972">
    <property type="entry name" value="Cyt_P450_CS"/>
</dbReference>
<dbReference type="InterPro" id="IPR036396">
    <property type="entry name" value="Cyt_P450_sf"/>
</dbReference>
<dbReference type="PANTHER" id="PTHR46696:SF1">
    <property type="entry name" value="CYTOCHROME P450 YJIB-RELATED"/>
    <property type="match status" value="1"/>
</dbReference>
<dbReference type="PANTHER" id="PTHR46696">
    <property type="entry name" value="P450, PUTATIVE (EUROFUNG)-RELATED"/>
    <property type="match status" value="1"/>
</dbReference>
<dbReference type="Pfam" id="PF00067">
    <property type="entry name" value="p450"/>
    <property type="match status" value="1"/>
</dbReference>
<dbReference type="PRINTS" id="PR00359">
    <property type="entry name" value="BP450"/>
</dbReference>
<dbReference type="SUPFAM" id="SSF48264">
    <property type="entry name" value="Cytochrome P450"/>
    <property type="match status" value="1"/>
</dbReference>
<dbReference type="PROSITE" id="PS00086">
    <property type="entry name" value="CYTOCHROME_P450"/>
    <property type="match status" value="1"/>
</dbReference>